<keyword id="KW-0028">Amino-acid biosynthesis</keyword>
<keyword id="KW-0963">Cytoplasm</keyword>
<keyword id="KW-0368">Histidine biosynthesis</keyword>
<keyword id="KW-0456">Lyase</keyword>
<sequence>MTEIRRETKETKIEVKLEINGSGKSNISTGVGFFDHMLEALAKHSGMDLEVFCDGDIYVDYHHTVEDVGIVLGEALFNEVYPVQNIERYANAVAILDEAAVEVDLDIGGRPYLVYDLPREGMIKDFDMELVEEFFKSLVFNFKIAAHIIYKRGTNKHHIVESAFKSFAVALRRALSYRESGIPSTKGII</sequence>
<dbReference type="EC" id="4.2.1.19" evidence="1"/>
<dbReference type="EMBL" id="CP001279">
    <property type="protein sequence ID" value="ACM92276.1"/>
    <property type="molecule type" value="Genomic_DNA"/>
</dbReference>
<dbReference type="RefSeq" id="WP_012663648.1">
    <property type="nucleotide sequence ID" value="NC_012115.1"/>
</dbReference>
<dbReference type="SMR" id="B9LAD4"/>
<dbReference type="STRING" id="598659.NAMH_1198"/>
<dbReference type="KEGG" id="nam:NAMH_1198"/>
<dbReference type="eggNOG" id="COG0131">
    <property type="taxonomic scope" value="Bacteria"/>
</dbReference>
<dbReference type="HOGENOM" id="CLU_044308_3_0_7"/>
<dbReference type="OrthoDB" id="9790411at2"/>
<dbReference type="UniPathway" id="UPA00031">
    <property type="reaction ID" value="UER00011"/>
</dbReference>
<dbReference type="Proteomes" id="UP000000448">
    <property type="component" value="Chromosome"/>
</dbReference>
<dbReference type="GO" id="GO:0005737">
    <property type="term" value="C:cytoplasm"/>
    <property type="evidence" value="ECO:0007669"/>
    <property type="project" value="UniProtKB-SubCell"/>
</dbReference>
<dbReference type="GO" id="GO:0004424">
    <property type="term" value="F:imidazoleglycerol-phosphate dehydratase activity"/>
    <property type="evidence" value="ECO:0007669"/>
    <property type="project" value="UniProtKB-UniRule"/>
</dbReference>
<dbReference type="GO" id="GO:0000105">
    <property type="term" value="P:L-histidine biosynthetic process"/>
    <property type="evidence" value="ECO:0007669"/>
    <property type="project" value="UniProtKB-UniRule"/>
</dbReference>
<dbReference type="CDD" id="cd07914">
    <property type="entry name" value="IGPD"/>
    <property type="match status" value="1"/>
</dbReference>
<dbReference type="FunFam" id="3.30.230.40:FF:000003">
    <property type="entry name" value="Imidazoleglycerol-phosphate dehydratase HisB"/>
    <property type="match status" value="1"/>
</dbReference>
<dbReference type="Gene3D" id="3.30.230.40">
    <property type="entry name" value="Imidazole glycerol phosphate dehydratase, domain 1"/>
    <property type="match status" value="2"/>
</dbReference>
<dbReference type="HAMAP" id="MF_00076">
    <property type="entry name" value="HisB"/>
    <property type="match status" value="1"/>
</dbReference>
<dbReference type="InterPro" id="IPR038494">
    <property type="entry name" value="IGPD_sf"/>
</dbReference>
<dbReference type="InterPro" id="IPR000807">
    <property type="entry name" value="ImidazoleglycerolP_deHydtase"/>
</dbReference>
<dbReference type="InterPro" id="IPR020565">
    <property type="entry name" value="ImidazoleglycerP_deHydtase_CS"/>
</dbReference>
<dbReference type="InterPro" id="IPR020568">
    <property type="entry name" value="Ribosomal_Su5_D2-typ_SF"/>
</dbReference>
<dbReference type="NCBIfam" id="NF002111">
    <property type="entry name" value="PRK00951.2-1"/>
    <property type="match status" value="1"/>
</dbReference>
<dbReference type="NCBIfam" id="NF002114">
    <property type="entry name" value="PRK00951.2-4"/>
    <property type="match status" value="1"/>
</dbReference>
<dbReference type="PANTHER" id="PTHR23133:SF2">
    <property type="entry name" value="IMIDAZOLEGLYCEROL-PHOSPHATE DEHYDRATASE"/>
    <property type="match status" value="1"/>
</dbReference>
<dbReference type="PANTHER" id="PTHR23133">
    <property type="entry name" value="IMIDAZOLEGLYCEROL-PHOSPHATE DEHYDRATASE HIS7"/>
    <property type="match status" value="1"/>
</dbReference>
<dbReference type="Pfam" id="PF00475">
    <property type="entry name" value="IGPD"/>
    <property type="match status" value="1"/>
</dbReference>
<dbReference type="SUPFAM" id="SSF54211">
    <property type="entry name" value="Ribosomal protein S5 domain 2-like"/>
    <property type="match status" value="2"/>
</dbReference>
<dbReference type="PROSITE" id="PS00954">
    <property type="entry name" value="IGP_DEHYDRATASE_1"/>
    <property type="match status" value="1"/>
</dbReference>
<dbReference type="PROSITE" id="PS00955">
    <property type="entry name" value="IGP_DEHYDRATASE_2"/>
    <property type="match status" value="1"/>
</dbReference>
<comment type="catalytic activity">
    <reaction evidence="1">
        <text>D-erythro-1-(imidazol-4-yl)glycerol 3-phosphate = 3-(imidazol-4-yl)-2-oxopropyl phosphate + H2O</text>
        <dbReference type="Rhea" id="RHEA:11040"/>
        <dbReference type="ChEBI" id="CHEBI:15377"/>
        <dbReference type="ChEBI" id="CHEBI:57766"/>
        <dbReference type="ChEBI" id="CHEBI:58278"/>
        <dbReference type="EC" id="4.2.1.19"/>
    </reaction>
</comment>
<comment type="pathway">
    <text evidence="1">Amino-acid biosynthesis; L-histidine biosynthesis; L-histidine from 5-phospho-alpha-D-ribose 1-diphosphate: step 6/9.</text>
</comment>
<comment type="subcellular location">
    <subcellularLocation>
        <location evidence="1">Cytoplasm</location>
    </subcellularLocation>
</comment>
<comment type="similarity">
    <text evidence="1">Belongs to the imidazoleglycerol-phosphate dehydratase family.</text>
</comment>
<proteinExistence type="inferred from homology"/>
<protein>
    <recommendedName>
        <fullName evidence="1">Imidazoleglycerol-phosphate dehydratase</fullName>
        <shortName evidence="1">IGPD</shortName>
        <ecNumber evidence="1">4.2.1.19</ecNumber>
    </recommendedName>
</protein>
<feature type="chain" id="PRO_1000190620" description="Imidazoleglycerol-phosphate dehydratase">
    <location>
        <begin position="1"/>
        <end position="189"/>
    </location>
</feature>
<organism>
    <name type="scientific">Nautilia profundicola (strain ATCC BAA-1463 / DSM 18972 / AmH)</name>
    <dbReference type="NCBI Taxonomy" id="598659"/>
    <lineage>
        <taxon>Bacteria</taxon>
        <taxon>Pseudomonadati</taxon>
        <taxon>Campylobacterota</taxon>
        <taxon>Epsilonproteobacteria</taxon>
        <taxon>Nautiliales</taxon>
        <taxon>Nautiliaceae</taxon>
        <taxon>Nautilia</taxon>
    </lineage>
</organism>
<reference key="1">
    <citation type="journal article" date="2009" name="PLoS Genet.">
        <title>Adaptations to submarine hydrothermal environments exemplified by the genome of Nautilia profundicola.</title>
        <authorList>
            <person name="Campbell B.J."/>
            <person name="Smith J.L."/>
            <person name="Hanson T.E."/>
            <person name="Klotz M.G."/>
            <person name="Stein L.Y."/>
            <person name="Lee C.K."/>
            <person name="Wu D."/>
            <person name="Robinson J.M."/>
            <person name="Khouri H.M."/>
            <person name="Eisen J.A."/>
            <person name="Cary S.C."/>
        </authorList>
    </citation>
    <scope>NUCLEOTIDE SEQUENCE [LARGE SCALE GENOMIC DNA]</scope>
    <source>
        <strain>ATCC BAA-1463 / DSM 18972 / AmH</strain>
    </source>
</reference>
<accession>B9LAD4</accession>
<evidence type="ECO:0000255" key="1">
    <source>
        <dbReference type="HAMAP-Rule" id="MF_00076"/>
    </source>
</evidence>
<name>HIS7_NAUPA</name>
<gene>
    <name evidence="1" type="primary">hisB</name>
    <name type="ordered locus">NAMH_1198</name>
</gene>